<feature type="chain" id="PRO_0000329794" description="Polyribonucleotide nucleotidyltransferase">
    <location>
        <begin position="1"/>
        <end position="723"/>
    </location>
</feature>
<feature type="domain" description="KH" evidence="1">
    <location>
        <begin position="555"/>
        <end position="614"/>
    </location>
</feature>
<feature type="domain" description="S1 motif" evidence="1">
    <location>
        <begin position="624"/>
        <end position="692"/>
    </location>
</feature>
<feature type="region of interest" description="Disordered" evidence="2">
    <location>
        <begin position="701"/>
        <end position="723"/>
    </location>
</feature>
<feature type="compositionally biased region" description="Low complexity" evidence="2">
    <location>
        <begin position="707"/>
        <end position="723"/>
    </location>
</feature>
<feature type="binding site" evidence="1">
    <location>
        <position position="488"/>
    </location>
    <ligand>
        <name>Mg(2+)</name>
        <dbReference type="ChEBI" id="CHEBI:18420"/>
    </ligand>
</feature>
<feature type="binding site" evidence="1">
    <location>
        <position position="494"/>
    </location>
    <ligand>
        <name>Mg(2+)</name>
        <dbReference type="ChEBI" id="CHEBI:18420"/>
    </ligand>
</feature>
<evidence type="ECO:0000255" key="1">
    <source>
        <dbReference type="HAMAP-Rule" id="MF_01595"/>
    </source>
</evidence>
<evidence type="ECO:0000256" key="2">
    <source>
        <dbReference type="SAM" id="MobiDB-lite"/>
    </source>
</evidence>
<reference key="1">
    <citation type="journal article" date="2006" name="Nat. Biotechnol.">
        <title>Genome sequence of the bioplastic-producing 'Knallgas' bacterium Ralstonia eutropha H16.</title>
        <authorList>
            <person name="Pohlmann A."/>
            <person name="Fricke W.F."/>
            <person name="Reinecke F."/>
            <person name="Kusian B."/>
            <person name="Liesegang H."/>
            <person name="Cramm R."/>
            <person name="Eitinger T."/>
            <person name="Ewering C."/>
            <person name="Poetter M."/>
            <person name="Schwartz E."/>
            <person name="Strittmatter A."/>
            <person name="Voss I."/>
            <person name="Gottschalk G."/>
            <person name="Steinbuechel A."/>
            <person name="Friedrich B."/>
            <person name="Bowien B."/>
        </authorList>
    </citation>
    <scope>NUCLEOTIDE SEQUENCE [LARGE SCALE GENOMIC DNA]</scope>
    <source>
        <strain>ATCC 17699 / DSM 428 / KCTC 22496 / NCIMB 10442 / H16 / Stanier 337</strain>
    </source>
</reference>
<gene>
    <name evidence="1" type="primary">pnp</name>
    <name type="ordered locus">H16_A1045</name>
</gene>
<proteinExistence type="inferred from homology"/>
<organism>
    <name type="scientific">Cupriavidus necator (strain ATCC 17699 / DSM 428 / KCTC 22496 / NCIMB 10442 / H16 / Stanier 337)</name>
    <name type="common">Ralstonia eutropha</name>
    <dbReference type="NCBI Taxonomy" id="381666"/>
    <lineage>
        <taxon>Bacteria</taxon>
        <taxon>Pseudomonadati</taxon>
        <taxon>Pseudomonadota</taxon>
        <taxon>Betaproteobacteria</taxon>
        <taxon>Burkholderiales</taxon>
        <taxon>Burkholderiaceae</taxon>
        <taxon>Cupriavidus</taxon>
    </lineage>
</organism>
<comment type="function">
    <text evidence="1">Involved in mRNA degradation. Catalyzes the phosphorolysis of single-stranded polyribonucleotides processively in the 3'- to 5'-direction.</text>
</comment>
<comment type="catalytic activity">
    <reaction evidence="1">
        <text>RNA(n+1) + phosphate = RNA(n) + a ribonucleoside 5'-diphosphate</text>
        <dbReference type="Rhea" id="RHEA:22096"/>
        <dbReference type="Rhea" id="RHEA-COMP:14527"/>
        <dbReference type="Rhea" id="RHEA-COMP:17342"/>
        <dbReference type="ChEBI" id="CHEBI:43474"/>
        <dbReference type="ChEBI" id="CHEBI:57930"/>
        <dbReference type="ChEBI" id="CHEBI:140395"/>
        <dbReference type="EC" id="2.7.7.8"/>
    </reaction>
</comment>
<comment type="cofactor">
    <cofactor evidence="1">
        <name>Mg(2+)</name>
        <dbReference type="ChEBI" id="CHEBI:18420"/>
    </cofactor>
</comment>
<comment type="subcellular location">
    <subcellularLocation>
        <location evidence="1">Cytoplasm</location>
    </subcellularLocation>
</comment>
<comment type="similarity">
    <text evidence="1">Belongs to the polyribonucleotide nucleotidyltransferase family.</text>
</comment>
<accession>Q0KCT4</accession>
<keyword id="KW-0963">Cytoplasm</keyword>
<keyword id="KW-0460">Magnesium</keyword>
<keyword id="KW-0479">Metal-binding</keyword>
<keyword id="KW-0548">Nucleotidyltransferase</keyword>
<keyword id="KW-1185">Reference proteome</keyword>
<keyword id="KW-0694">RNA-binding</keyword>
<keyword id="KW-0808">Transferase</keyword>
<dbReference type="EC" id="2.7.7.8" evidence="1"/>
<dbReference type="EMBL" id="AM260479">
    <property type="protein sequence ID" value="CAJ92187.1"/>
    <property type="molecule type" value="Genomic_DNA"/>
</dbReference>
<dbReference type="RefSeq" id="WP_011614853.1">
    <property type="nucleotide sequence ID" value="NZ_CP039287.1"/>
</dbReference>
<dbReference type="SMR" id="Q0KCT4"/>
<dbReference type="STRING" id="381666.H16_A1045"/>
<dbReference type="KEGG" id="reh:H16_A1045"/>
<dbReference type="PATRIC" id="fig|381666.6.peg.1429"/>
<dbReference type="eggNOG" id="COG1185">
    <property type="taxonomic scope" value="Bacteria"/>
</dbReference>
<dbReference type="HOGENOM" id="CLU_004217_2_2_4"/>
<dbReference type="OrthoDB" id="9804305at2"/>
<dbReference type="Proteomes" id="UP000008210">
    <property type="component" value="Chromosome 1"/>
</dbReference>
<dbReference type="GO" id="GO:0005829">
    <property type="term" value="C:cytosol"/>
    <property type="evidence" value="ECO:0007669"/>
    <property type="project" value="TreeGrafter"/>
</dbReference>
<dbReference type="GO" id="GO:0000175">
    <property type="term" value="F:3'-5'-RNA exonuclease activity"/>
    <property type="evidence" value="ECO:0007669"/>
    <property type="project" value="TreeGrafter"/>
</dbReference>
<dbReference type="GO" id="GO:0000287">
    <property type="term" value="F:magnesium ion binding"/>
    <property type="evidence" value="ECO:0007669"/>
    <property type="project" value="UniProtKB-UniRule"/>
</dbReference>
<dbReference type="GO" id="GO:0004654">
    <property type="term" value="F:polyribonucleotide nucleotidyltransferase activity"/>
    <property type="evidence" value="ECO:0007669"/>
    <property type="project" value="UniProtKB-UniRule"/>
</dbReference>
<dbReference type="GO" id="GO:0003723">
    <property type="term" value="F:RNA binding"/>
    <property type="evidence" value="ECO:0007669"/>
    <property type="project" value="UniProtKB-UniRule"/>
</dbReference>
<dbReference type="GO" id="GO:0006402">
    <property type="term" value="P:mRNA catabolic process"/>
    <property type="evidence" value="ECO:0007669"/>
    <property type="project" value="UniProtKB-UniRule"/>
</dbReference>
<dbReference type="GO" id="GO:0006396">
    <property type="term" value="P:RNA processing"/>
    <property type="evidence" value="ECO:0007669"/>
    <property type="project" value="InterPro"/>
</dbReference>
<dbReference type="CDD" id="cd02393">
    <property type="entry name" value="KH-I_PNPase"/>
    <property type="match status" value="1"/>
</dbReference>
<dbReference type="CDD" id="cd11363">
    <property type="entry name" value="RNase_PH_PNPase_1"/>
    <property type="match status" value="1"/>
</dbReference>
<dbReference type="CDD" id="cd11364">
    <property type="entry name" value="RNase_PH_PNPase_2"/>
    <property type="match status" value="1"/>
</dbReference>
<dbReference type="CDD" id="cd04472">
    <property type="entry name" value="S1_PNPase"/>
    <property type="match status" value="1"/>
</dbReference>
<dbReference type="FunFam" id="3.30.1370.10:FF:000001">
    <property type="entry name" value="Polyribonucleotide nucleotidyltransferase"/>
    <property type="match status" value="1"/>
</dbReference>
<dbReference type="FunFam" id="3.30.230.70:FF:000001">
    <property type="entry name" value="Polyribonucleotide nucleotidyltransferase"/>
    <property type="match status" value="1"/>
</dbReference>
<dbReference type="FunFam" id="3.30.230.70:FF:000002">
    <property type="entry name" value="Polyribonucleotide nucleotidyltransferase"/>
    <property type="match status" value="1"/>
</dbReference>
<dbReference type="FunFam" id="2.40.50.140:FF:000189">
    <property type="entry name" value="Polyribonucleotide nucleotidyltransferase, putative"/>
    <property type="match status" value="1"/>
</dbReference>
<dbReference type="Gene3D" id="3.30.230.70">
    <property type="entry name" value="GHMP Kinase, N-terminal domain"/>
    <property type="match status" value="2"/>
</dbReference>
<dbReference type="Gene3D" id="3.30.1370.10">
    <property type="entry name" value="K Homology domain, type 1"/>
    <property type="match status" value="1"/>
</dbReference>
<dbReference type="Gene3D" id="2.40.50.140">
    <property type="entry name" value="Nucleic acid-binding proteins"/>
    <property type="match status" value="1"/>
</dbReference>
<dbReference type="HAMAP" id="MF_01595">
    <property type="entry name" value="PNPase"/>
    <property type="match status" value="1"/>
</dbReference>
<dbReference type="InterPro" id="IPR001247">
    <property type="entry name" value="ExoRNase_PH_dom1"/>
</dbReference>
<dbReference type="InterPro" id="IPR015847">
    <property type="entry name" value="ExoRNase_PH_dom2"/>
</dbReference>
<dbReference type="InterPro" id="IPR036345">
    <property type="entry name" value="ExoRNase_PH_dom2_sf"/>
</dbReference>
<dbReference type="InterPro" id="IPR004087">
    <property type="entry name" value="KH_dom"/>
</dbReference>
<dbReference type="InterPro" id="IPR004088">
    <property type="entry name" value="KH_dom_type_1"/>
</dbReference>
<dbReference type="InterPro" id="IPR036612">
    <property type="entry name" value="KH_dom_type_1_sf"/>
</dbReference>
<dbReference type="InterPro" id="IPR012340">
    <property type="entry name" value="NA-bd_OB-fold"/>
</dbReference>
<dbReference type="InterPro" id="IPR012162">
    <property type="entry name" value="PNPase"/>
</dbReference>
<dbReference type="InterPro" id="IPR027408">
    <property type="entry name" value="PNPase/RNase_PH_dom_sf"/>
</dbReference>
<dbReference type="InterPro" id="IPR015848">
    <property type="entry name" value="PNPase_PH_RNA-bd_bac/org-type"/>
</dbReference>
<dbReference type="InterPro" id="IPR036456">
    <property type="entry name" value="PNPase_PH_RNA-bd_sf"/>
</dbReference>
<dbReference type="InterPro" id="IPR020568">
    <property type="entry name" value="Ribosomal_Su5_D2-typ_SF"/>
</dbReference>
<dbReference type="InterPro" id="IPR003029">
    <property type="entry name" value="S1_domain"/>
</dbReference>
<dbReference type="NCBIfam" id="TIGR03591">
    <property type="entry name" value="polynuc_phos"/>
    <property type="match status" value="1"/>
</dbReference>
<dbReference type="NCBIfam" id="NF008805">
    <property type="entry name" value="PRK11824.1"/>
    <property type="match status" value="1"/>
</dbReference>
<dbReference type="PANTHER" id="PTHR11252">
    <property type="entry name" value="POLYRIBONUCLEOTIDE NUCLEOTIDYLTRANSFERASE"/>
    <property type="match status" value="1"/>
</dbReference>
<dbReference type="PANTHER" id="PTHR11252:SF0">
    <property type="entry name" value="POLYRIBONUCLEOTIDE NUCLEOTIDYLTRANSFERASE 1, MITOCHONDRIAL"/>
    <property type="match status" value="1"/>
</dbReference>
<dbReference type="Pfam" id="PF00013">
    <property type="entry name" value="KH_1"/>
    <property type="match status" value="1"/>
</dbReference>
<dbReference type="Pfam" id="PF03726">
    <property type="entry name" value="PNPase"/>
    <property type="match status" value="1"/>
</dbReference>
<dbReference type="Pfam" id="PF01138">
    <property type="entry name" value="RNase_PH"/>
    <property type="match status" value="2"/>
</dbReference>
<dbReference type="Pfam" id="PF03725">
    <property type="entry name" value="RNase_PH_C"/>
    <property type="match status" value="2"/>
</dbReference>
<dbReference type="Pfam" id="PF00575">
    <property type="entry name" value="S1"/>
    <property type="match status" value="1"/>
</dbReference>
<dbReference type="PIRSF" id="PIRSF005499">
    <property type="entry name" value="PNPase"/>
    <property type="match status" value="1"/>
</dbReference>
<dbReference type="SMART" id="SM00322">
    <property type="entry name" value="KH"/>
    <property type="match status" value="1"/>
</dbReference>
<dbReference type="SMART" id="SM00316">
    <property type="entry name" value="S1"/>
    <property type="match status" value="1"/>
</dbReference>
<dbReference type="SUPFAM" id="SSF54791">
    <property type="entry name" value="Eukaryotic type KH-domain (KH-domain type I)"/>
    <property type="match status" value="1"/>
</dbReference>
<dbReference type="SUPFAM" id="SSF50249">
    <property type="entry name" value="Nucleic acid-binding proteins"/>
    <property type="match status" value="1"/>
</dbReference>
<dbReference type="SUPFAM" id="SSF46915">
    <property type="entry name" value="Polynucleotide phosphorylase/guanosine pentaphosphate synthase (PNPase/GPSI), domain 3"/>
    <property type="match status" value="1"/>
</dbReference>
<dbReference type="SUPFAM" id="SSF55666">
    <property type="entry name" value="Ribonuclease PH domain 2-like"/>
    <property type="match status" value="2"/>
</dbReference>
<dbReference type="SUPFAM" id="SSF54211">
    <property type="entry name" value="Ribosomal protein S5 domain 2-like"/>
    <property type="match status" value="2"/>
</dbReference>
<dbReference type="PROSITE" id="PS50084">
    <property type="entry name" value="KH_TYPE_1"/>
    <property type="match status" value="1"/>
</dbReference>
<dbReference type="PROSITE" id="PS50126">
    <property type="entry name" value="S1"/>
    <property type="match status" value="1"/>
</dbReference>
<protein>
    <recommendedName>
        <fullName evidence="1">Polyribonucleotide nucleotidyltransferase</fullName>
        <ecNumber evidence="1">2.7.7.8</ecNumber>
    </recommendedName>
    <alternativeName>
        <fullName evidence="1">Polynucleotide phosphorylase</fullName>
        <shortName evidence="1">PNPase</shortName>
    </alternativeName>
</protein>
<sequence length="723" mass="77729">MSMFNKIVKEFQWGQHTVRMETGEIARQAGGAVLVDVEDTVVLATVVAAKNPKPGQDFFPLTVDYIEKTYAAGKIPGGFFKREGRPSENETLTSRLIDRPLRPLFPEGFYNDVQVVIHVVSLNPEVPADIPALIGASAALAVSGIPFNGPVGAARVGYKDGQYLLNPTRSQLATSDLDLVVAGTERAVLMVESEANQLSEDVMLGAVVYGHEQMQIAINAIHELVREGGKPEWDWAPAAKNEPLIAKVTEVALPLLQEAYQLRQKSARSQKLKEVNANVAAALAAAGVEADKVEVGNIMFDLEAKIVRGQVLAGEPRIDGRDTRTVRPIEIRSSVLPRAHGSALFTRGETQALVVATLGTKSDEQIIDALAGEYRDRFMLHYNMPPFATGETGRVGSPKRREIGHGRLAKRALIPVLPKDDEFAYTIRLVSEITESNGSSSMASVCGGCLALMDAGVPVKAHVAGVAMGLILEGNKFAVLTDILGDEDHLGDMDFKVAGTDNGITALQMDIKVQGITKEIMQVALAQAREGRLHILHKMQEAMGHARTELSAHAPRMITMKIHPDKIREVIGKGGSTIQALTKETGTTIDIQEDGTITIASTSTDGMAEAKRRIEGITAEAEVGKIYAGTVLKLLDFGAIVNILPGKDGLLHISEIVNERVKDIKDWLKEGQQVRVKLIQADEKGRLRLSLKAALTEEGGSISPINAGEAAAPAAPAEGSEQQ</sequence>
<name>PNP_CUPNH</name>